<comment type="function">
    <text evidence="1">Part of the ABC transporter complex CysAWTP involved in sulfate/thiosulfate import. Responsible for energy coupling to the transport system.</text>
</comment>
<comment type="catalytic activity">
    <reaction evidence="1">
        <text>sulfate(out) + ATP + H2O = sulfate(in) + ADP + phosphate + H(+)</text>
        <dbReference type="Rhea" id="RHEA:10192"/>
        <dbReference type="ChEBI" id="CHEBI:15377"/>
        <dbReference type="ChEBI" id="CHEBI:15378"/>
        <dbReference type="ChEBI" id="CHEBI:16189"/>
        <dbReference type="ChEBI" id="CHEBI:30616"/>
        <dbReference type="ChEBI" id="CHEBI:43474"/>
        <dbReference type="ChEBI" id="CHEBI:456216"/>
        <dbReference type="EC" id="7.3.2.3"/>
    </reaction>
</comment>
<comment type="catalytic activity">
    <reaction evidence="1">
        <text>thiosulfate(out) + ATP + H2O = thiosulfate(in) + ADP + phosphate + H(+)</text>
        <dbReference type="Rhea" id="RHEA:29871"/>
        <dbReference type="ChEBI" id="CHEBI:15377"/>
        <dbReference type="ChEBI" id="CHEBI:15378"/>
        <dbReference type="ChEBI" id="CHEBI:30616"/>
        <dbReference type="ChEBI" id="CHEBI:33542"/>
        <dbReference type="ChEBI" id="CHEBI:43474"/>
        <dbReference type="ChEBI" id="CHEBI:456216"/>
        <dbReference type="EC" id="7.3.2.3"/>
    </reaction>
</comment>
<comment type="subunit">
    <text evidence="1">The complex is composed of two ATP-binding proteins (CysA), two transmembrane proteins (CysT and CysW) and a solute-binding protein (CysP).</text>
</comment>
<comment type="subcellular location">
    <subcellularLocation>
        <location evidence="1">Cell inner membrane</location>
        <topology evidence="1">Peripheral membrane protein</topology>
    </subcellularLocation>
</comment>
<comment type="similarity">
    <text evidence="1">Belongs to the ABC transporter superfamily. Sulfate/tungstate importer (TC 3.A.1.6) family.</text>
</comment>
<keyword id="KW-0067">ATP-binding</keyword>
<keyword id="KW-0997">Cell inner membrane</keyword>
<keyword id="KW-1003">Cell membrane</keyword>
<keyword id="KW-0472">Membrane</keyword>
<keyword id="KW-0547">Nucleotide-binding</keyword>
<keyword id="KW-1185">Reference proteome</keyword>
<keyword id="KW-0764">Sulfate transport</keyword>
<keyword id="KW-1278">Translocase</keyword>
<keyword id="KW-0813">Transport</keyword>
<dbReference type="EC" id="7.3.2.3" evidence="1"/>
<dbReference type="EMBL" id="AL646052">
    <property type="protein sequence ID" value="CAD15049.1"/>
    <property type="molecule type" value="Genomic_DNA"/>
</dbReference>
<dbReference type="RefSeq" id="WP_011001296.1">
    <property type="nucleotide sequence ID" value="NC_003295.1"/>
</dbReference>
<dbReference type="SMR" id="Q8XZP8"/>
<dbReference type="STRING" id="267608.RSc1347"/>
<dbReference type="EnsemblBacteria" id="CAD15049">
    <property type="protein sequence ID" value="CAD15049"/>
    <property type="gene ID" value="RSc1347"/>
</dbReference>
<dbReference type="KEGG" id="rso:RSc1347"/>
<dbReference type="eggNOG" id="COG1118">
    <property type="taxonomic scope" value="Bacteria"/>
</dbReference>
<dbReference type="HOGENOM" id="CLU_000604_1_1_4"/>
<dbReference type="Proteomes" id="UP000001436">
    <property type="component" value="Chromosome"/>
</dbReference>
<dbReference type="GO" id="GO:0043190">
    <property type="term" value="C:ATP-binding cassette (ABC) transporter complex"/>
    <property type="evidence" value="ECO:0007669"/>
    <property type="project" value="InterPro"/>
</dbReference>
<dbReference type="GO" id="GO:0015419">
    <property type="term" value="F:ABC-type sulfate transporter activity"/>
    <property type="evidence" value="ECO:0007669"/>
    <property type="project" value="InterPro"/>
</dbReference>
<dbReference type="GO" id="GO:0102025">
    <property type="term" value="F:ABC-type thiosulfate transporter activity"/>
    <property type="evidence" value="ECO:0007669"/>
    <property type="project" value="RHEA"/>
</dbReference>
<dbReference type="GO" id="GO:0005524">
    <property type="term" value="F:ATP binding"/>
    <property type="evidence" value="ECO:0007669"/>
    <property type="project" value="UniProtKB-KW"/>
</dbReference>
<dbReference type="GO" id="GO:0016887">
    <property type="term" value="F:ATP hydrolysis activity"/>
    <property type="evidence" value="ECO:0007669"/>
    <property type="project" value="InterPro"/>
</dbReference>
<dbReference type="CDD" id="cd03296">
    <property type="entry name" value="ABC_CysA_sulfate_importer"/>
    <property type="match status" value="1"/>
</dbReference>
<dbReference type="FunFam" id="3.40.50.300:FF:000227">
    <property type="entry name" value="Sulfate/thiosulfate import ATP-binding protein CysA"/>
    <property type="match status" value="1"/>
</dbReference>
<dbReference type="Gene3D" id="2.40.50.100">
    <property type="match status" value="1"/>
</dbReference>
<dbReference type="Gene3D" id="3.40.50.300">
    <property type="entry name" value="P-loop containing nucleotide triphosphate hydrolases"/>
    <property type="match status" value="1"/>
</dbReference>
<dbReference type="InterPro" id="IPR003593">
    <property type="entry name" value="AAA+_ATPase"/>
</dbReference>
<dbReference type="InterPro" id="IPR050093">
    <property type="entry name" value="ABC_SmlMolc_Importer"/>
</dbReference>
<dbReference type="InterPro" id="IPR003439">
    <property type="entry name" value="ABC_transporter-like_ATP-bd"/>
</dbReference>
<dbReference type="InterPro" id="IPR017871">
    <property type="entry name" value="ABC_transporter-like_CS"/>
</dbReference>
<dbReference type="InterPro" id="IPR041193">
    <property type="entry name" value="CysA_C"/>
</dbReference>
<dbReference type="InterPro" id="IPR008995">
    <property type="entry name" value="Mo/tungstate-bd_C_term_dom"/>
</dbReference>
<dbReference type="InterPro" id="IPR027417">
    <property type="entry name" value="P-loop_NTPase"/>
</dbReference>
<dbReference type="InterPro" id="IPR005666">
    <property type="entry name" value="Sulph_transpt1"/>
</dbReference>
<dbReference type="InterPro" id="IPR024765">
    <property type="entry name" value="TOBE-like"/>
</dbReference>
<dbReference type="NCBIfam" id="TIGR00968">
    <property type="entry name" value="3a0106s01"/>
    <property type="match status" value="1"/>
</dbReference>
<dbReference type="PANTHER" id="PTHR42781">
    <property type="entry name" value="SPERMIDINE/PUTRESCINE IMPORT ATP-BINDING PROTEIN POTA"/>
    <property type="match status" value="1"/>
</dbReference>
<dbReference type="PANTHER" id="PTHR42781:SF4">
    <property type="entry name" value="SPERMIDINE_PUTRESCINE IMPORT ATP-BINDING PROTEIN POTA"/>
    <property type="match status" value="1"/>
</dbReference>
<dbReference type="Pfam" id="PF00005">
    <property type="entry name" value="ABC_tran"/>
    <property type="match status" value="1"/>
</dbReference>
<dbReference type="Pfam" id="PF17850">
    <property type="entry name" value="CysA_C_terminal"/>
    <property type="match status" value="1"/>
</dbReference>
<dbReference type="Pfam" id="PF12857">
    <property type="entry name" value="TOBE_3"/>
    <property type="match status" value="1"/>
</dbReference>
<dbReference type="SMART" id="SM00382">
    <property type="entry name" value="AAA"/>
    <property type="match status" value="1"/>
</dbReference>
<dbReference type="SUPFAM" id="SSF50331">
    <property type="entry name" value="MOP-like"/>
    <property type="match status" value="1"/>
</dbReference>
<dbReference type="SUPFAM" id="SSF52540">
    <property type="entry name" value="P-loop containing nucleoside triphosphate hydrolases"/>
    <property type="match status" value="1"/>
</dbReference>
<dbReference type="PROSITE" id="PS00211">
    <property type="entry name" value="ABC_TRANSPORTER_1"/>
    <property type="match status" value="1"/>
</dbReference>
<dbReference type="PROSITE" id="PS50893">
    <property type="entry name" value="ABC_TRANSPORTER_2"/>
    <property type="match status" value="1"/>
</dbReference>
<dbReference type="PROSITE" id="PS51237">
    <property type="entry name" value="CYSA"/>
    <property type="match status" value="1"/>
</dbReference>
<gene>
    <name evidence="1" type="primary">cysA</name>
    <name type="ordered locus">RSc1347</name>
    <name type="ORF">RS02870</name>
</gene>
<reference key="1">
    <citation type="journal article" date="2002" name="Nature">
        <title>Genome sequence of the plant pathogen Ralstonia solanacearum.</title>
        <authorList>
            <person name="Salanoubat M."/>
            <person name="Genin S."/>
            <person name="Artiguenave F."/>
            <person name="Gouzy J."/>
            <person name="Mangenot S."/>
            <person name="Arlat M."/>
            <person name="Billault A."/>
            <person name="Brottier P."/>
            <person name="Camus J.-C."/>
            <person name="Cattolico L."/>
            <person name="Chandler M."/>
            <person name="Choisne N."/>
            <person name="Claudel-Renard C."/>
            <person name="Cunnac S."/>
            <person name="Demange N."/>
            <person name="Gaspin C."/>
            <person name="Lavie M."/>
            <person name="Moisan A."/>
            <person name="Robert C."/>
            <person name="Saurin W."/>
            <person name="Schiex T."/>
            <person name="Siguier P."/>
            <person name="Thebault P."/>
            <person name="Whalen M."/>
            <person name="Wincker P."/>
            <person name="Levy M."/>
            <person name="Weissenbach J."/>
            <person name="Boucher C.A."/>
        </authorList>
    </citation>
    <scope>NUCLEOTIDE SEQUENCE [LARGE SCALE GENOMIC DNA]</scope>
    <source>
        <strain>ATCC BAA-1114 / GMI1000</strain>
    </source>
</reference>
<organism>
    <name type="scientific">Ralstonia nicotianae (strain ATCC BAA-1114 / GMI1000)</name>
    <name type="common">Ralstonia solanacearum</name>
    <dbReference type="NCBI Taxonomy" id="267608"/>
    <lineage>
        <taxon>Bacteria</taxon>
        <taxon>Pseudomonadati</taxon>
        <taxon>Pseudomonadota</taxon>
        <taxon>Betaproteobacteria</taxon>
        <taxon>Burkholderiales</taxon>
        <taxon>Burkholderiaceae</taxon>
        <taxon>Ralstonia</taxon>
        <taxon>Ralstonia solanacearum species complex</taxon>
    </lineage>
</organism>
<sequence length="372" mass="40761">MSIQVQHVTKRFGNFVALDDVSLAFRQGELTALLGPSGCGKTTLLRIIAGLEHADAGTILLNGEDASDRHVRERQVGFVFQHYALFKHMTVFENVAFGLRVKPRAQRPSEAQIRAKVKALLELVQLDWLAERYPPQLSGGQRQRIALARALAVEPRVLLLDEPFGALDAKVRKELRRWLRRLHDDLHVTSLFVTHDQEEALEVADSVVLMNRGQVEQVGSPDAVYNTPATPFVYGFLGNVNLFHGRLEAGEGGSVLHVGETALSVPPGGVDASRADQAVAFVRPHEIDLERYAPGAEGIPVTLRRALTLGAVAQLELERTDSDDIIEVSLPIERFRAQGLREGETLVVRPRAIRVFAQGQGSEHAAAAQAAA</sequence>
<evidence type="ECO:0000255" key="1">
    <source>
        <dbReference type="HAMAP-Rule" id="MF_01701"/>
    </source>
</evidence>
<name>CYSA_RALN1</name>
<protein>
    <recommendedName>
        <fullName evidence="1">Sulfate/thiosulfate import ATP-binding protein CysA</fullName>
        <ecNumber evidence="1">7.3.2.3</ecNumber>
    </recommendedName>
    <alternativeName>
        <fullName evidence="1">Sulfate-transporting ATPase</fullName>
    </alternativeName>
</protein>
<proteinExistence type="inferred from homology"/>
<accession>Q8XZP8</accession>
<feature type="chain" id="PRO_0000092285" description="Sulfate/thiosulfate import ATP-binding protein CysA">
    <location>
        <begin position="1"/>
        <end position="372"/>
    </location>
</feature>
<feature type="domain" description="ABC transporter" evidence="1">
    <location>
        <begin position="3"/>
        <end position="237"/>
    </location>
</feature>
<feature type="binding site" evidence="1">
    <location>
        <begin position="35"/>
        <end position="42"/>
    </location>
    <ligand>
        <name>ATP</name>
        <dbReference type="ChEBI" id="CHEBI:30616"/>
    </ligand>
</feature>